<evidence type="ECO:0000255" key="1">
    <source>
        <dbReference type="HAMAP-Rule" id="MF_01038"/>
    </source>
</evidence>
<keyword id="KW-0324">Glycolysis</keyword>
<keyword id="KW-0413">Isomerase</keyword>
<keyword id="KW-0464">Manganese</keyword>
<keyword id="KW-0479">Metal-binding</keyword>
<keyword id="KW-1185">Reference proteome</keyword>
<proteinExistence type="inferred from homology"/>
<dbReference type="EC" id="5.4.2.12" evidence="1"/>
<dbReference type="EMBL" id="AP006840">
    <property type="protein sequence ID" value="BAD39233.1"/>
    <property type="molecule type" value="Genomic_DNA"/>
</dbReference>
<dbReference type="RefSeq" id="WP_011194383.1">
    <property type="nucleotide sequence ID" value="NC_006177.1"/>
</dbReference>
<dbReference type="SMR" id="Q67SW0"/>
<dbReference type="STRING" id="292459.STH248"/>
<dbReference type="KEGG" id="sth:STH248"/>
<dbReference type="eggNOG" id="COG0696">
    <property type="taxonomic scope" value="Bacteria"/>
</dbReference>
<dbReference type="HOGENOM" id="CLU_026099_2_0_9"/>
<dbReference type="OrthoDB" id="9800863at2"/>
<dbReference type="UniPathway" id="UPA00109">
    <property type="reaction ID" value="UER00186"/>
</dbReference>
<dbReference type="Proteomes" id="UP000000417">
    <property type="component" value="Chromosome"/>
</dbReference>
<dbReference type="GO" id="GO:0005829">
    <property type="term" value="C:cytosol"/>
    <property type="evidence" value="ECO:0007669"/>
    <property type="project" value="TreeGrafter"/>
</dbReference>
<dbReference type="GO" id="GO:0030145">
    <property type="term" value="F:manganese ion binding"/>
    <property type="evidence" value="ECO:0007669"/>
    <property type="project" value="UniProtKB-UniRule"/>
</dbReference>
<dbReference type="GO" id="GO:0004619">
    <property type="term" value="F:phosphoglycerate mutase activity"/>
    <property type="evidence" value="ECO:0007669"/>
    <property type="project" value="UniProtKB-EC"/>
</dbReference>
<dbReference type="GO" id="GO:0006007">
    <property type="term" value="P:glucose catabolic process"/>
    <property type="evidence" value="ECO:0007669"/>
    <property type="project" value="InterPro"/>
</dbReference>
<dbReference type="GO" id="GO:0006096">
    <property type="term" value="P:glycolytic process"/>
    <property type="evidence" value="ECO:0007669"/>
    <property type="project" value="UniProtKB-UniRule"/>
</dbReference>
<dbReference type="CDD" id="cd16010">
    <property type="entry name" value="iPGM"/>
    <property type="match status" value="1"/>
</dbReference>
<dbReference type="FunFam" id="3.40.1450.10:FF:000001">
    <property type="entry name" value="2,3-bisphosphoglycerate-independent phosphoglycerate mutase"/>
    <property type="match status" value="1"/>
</dbReference>
<dbReference type="Gene3D" id="3.40.720.10">
    <property type="entry name" value="Alkaline Phosphatase, subunit A"/>
    <property type="match status" value="1"/>
</dbReference>
<dbReference type="Gene3D" id="3.40.1450.10">
    <property type="entry name" value="BPG-independent phosphoglycerate mutase, domain B"/>
    <property type="match status" value="1"/>
</dbReference>
<dbReference type="HAMAP" id="MF_01038">
    <property type="entry name" value="GpmI"/>
    <property type="match status" value="1"/>
</dbReference>
<dbReference type="InterPro" id="IPR017850">
    <property type="entry name" value="Alkaline_phosphatase_core_sf"/>
</dbReference>
<dbReference type="InterPro" id="IPR011258">
    <property type="entry name" value="BPG-indep_PGM_N"/>
</dbReference>
<dbReference type="InterPro" id="IPR006124">
    <property type="entry name" value="Metalloenzyme"/>
</dbReference>
<dbReference type="InterPro" id="IPR036646">
    <property type="entry name" value="PGAM_B_sf"/>
</dbReference>
<dbReference type="InterPro" id="IPR005995">
    <property type="entry name" value="Pgm_bpd_ind"/>
</dbReference>
<dbReference type="NCBIfam" id="TIGR01307">
    <property type="entry name" value="pgm_bpd_ind"/>
    <property type="match status" value="1"/>
</dbReference>
<dbReference type="PANTHER" id="PTHR31637">
    <property type="entry name" value="2,3-BISPHOSPHOGLYCERATE-INDEPENDENT PHOSPHOGLYCERATE MUTASE"/>
    <property type="match status" value="1"/>
</dbReference>
<dbReference type="PANTHER" id="PTHR31637:SF0">
    <property type="entry name" value="2,3-BISPHOSPHOGLYCERATE-INDEPENDENT PHOSPHOGLYCERATE MUTASE"/>
    <property type="match status" value="1"/>
</dbReference>
<dbReference type="Pfam" id="PF06415">
    <property type="entry name" value="iPGM_N"/>
    <property type="match status" value="1"/>
</dbReference>
<dbReference type="Pfam" id="PF01676">
    <property type="entry name" value="Metalloenzyme"/>
    <property type="match status" value="1"/>
</dbReference>
<dbReference type="PIRSF" id="PIRSF001492">
    <property type="entry name" value="IPGAM"/>
    <property type="match status" value="1"/>
</dbReference>
<dbReference type="SUPFAM" id="SSF64158">
    <property type="entry name" value="2,3-Bisphosphoglycerate-independent phosphoglycerate mutase, substrate-binding domain"/>
    <property type="match status" value="1"/>
</dbReference>
<dbReference type="SUPFAM" id="SSF53649">
    <property type="entry name" value="Alkaline phosphatase-like"/>
    <property type="match status" value="1"/>
</dbReference>
<sequence length="517" mass="56812">MSAYRRPVALIVLDGWGLNPDPRANAVAMARHPNFDRLMARYPHTTLTASGEAVGLLPGQMGDSNVGHLNLGAGRIVYQTLVRIWRSIQDGSFYTLPVWRPVLDRAKQPGKALHLMGLVSDGGVHSHIDHLLALIDLAKRENVERVYVHAFLDGRDVPPQSALPYLERVEAKLKETGIGAIATISGRYYAMDRDKRWDRTEKAFLAITQGIGHTAGSVAEAVERAYARGETDEFVQPTVIEGVDGRVREGDGVIFFNFRPDRARQLVRALHETAFDGFKRPEGYRPVELVTMTQYDQTFTDIPVAFGPQFVDVPMGQVVAEAGLRQLRIAETEKYAHVTYFFNGGEERVFPGEERVLVPSPKVATYDLKPEMSAYEVAREAVKWIEEDRTDFIVLNFANPDMVGHTGVLEAAIRAVEAVDECLGQVVDALLAKGGAAVIIADHGNCDQMVDYETGAPHTNHTLNPVPCILVDDQRLDAKLKPGVLANVAPTLLEIIGLPKPPQMDADSLLVSNAEGA</sequence>
<feature type="chain" id="PRO_0000212218" description="2,3-bisphosphoglycerate-independent phosphoglycerate mutase">
    <location>
        <begin position="1"/>
        <end position="517"/>
    </location>
</feature>
<feature type="active site" description="Phosphoserine intermediate" evidence="1">
    <location>
        <position position="64"/>
    </location>
</feature>
<feature type="binding site" evidence="1">
    <location>
        <position position="14"/>
    </location>
    <ligand>
        <name>Mn(2+)</name>
        <dbReference type="ChEBI" id="CHEBI:29035"/>
        <label>2</label>
    </ligand>
</feature>
<feature type="binding site" evidence="1">
    <location>
        <position position="64"/>
    </location>
    <ligand>
        <name>Mn(2+)</name>
        <dbReference type="ChEBI" id="CHEBI:29035"/>
        <label>2</label>
    </ligand>
</feature>
<feature type="binding site" evidence="1">
    <location>
        <position position="125"/>
    </location>
    <ligand>
        <name>substrate</name>
    </ligand>
</feature>
<feature type="binding site" evidence="1">
    <location>
        <begin position="155"/>
        <end position="156"/>
    </location>
    <ligand>
        <name>substrate</name>
    </ligand>
</feature>
<feature type="binding site" evidence="1">
    <location>
        <position position="187"/>
    </location>
    <ligand>
        <name>substrate</name>
    </ligand>
</feature>
<feature type="binding site" evidence="1">
    <location>
        <position position="193"/>
    </location>
    <ligand>
        <name>substrate</name>
    </ligand>
</feature>
<feature type="binding site" evidence="1">
    <location>
        <begin position="259"/>
        <end position="262"/>
    </location>
    <ligand>
        <name>substrate</name>
    </ligand>
</feature>
<feature type="binding site" evidence="1">
    <location>
        <position position="334"/>
    </location>
    <ligand>
        <name>substrate</name>
    </ligand>
</feature>
<feature type="binding site" evidence="1">
    <location>
        <position position="401"/>
    </location>
    <ligand>
        <name>Mn(2+)</name>
        <dbReference type="ChEBI" id="CHEBI:29035"/>
        <label>1</label>
    </ligand>
</feature>
<feature type="binding site" evidence="1">
    <location>
        <position position="405"/>
    </location>
    <ligand>
        <name>Mn(2+)</name>
        <dbReference type="ChEBI" id="CHEBI:29035"/>
        <label>1</label>
    </ligand>
</feature>
<feature type="binding site" evidence="1">
    <location>
        <position position="442"/>
    </location>
    <ligand>
        <name>Mn(2+)</name>
        <dbReference type="ChEBI" id="CHEBI:29035"/>
        <label>2</label>
    </ligand>
</feature>
<feature type="binding site" evidence="1">
    <location>
        <position position="443"/>
    </location>
    <ligand>
        <name>Mn(2+)</name>
        <dbReference type="ChEBI" id="CHEBI:29035"/>
        <label>2</label>
    </ligand>
</feature>
<feature type="binding site" evidence="1">
    <location>
        <position position="461"/>
    </location>
    <ligand>
        <name>Mn(2+)</name>
        <dbReference type="ChEBI" id="CHEBI:29035"/>
        <label>1</label>
    </ligand>
</feature>
<protein>
    <recommendedName>
        <fullName evidence="1">2,3-bisphosphoglycerate-independent phosphoglycerate mutase</fullName>
        <shortName evidence="1">BPG-independent PGAM</shortName>
        <shortName evidence="1">Phosphoglyceromutase</shortName>
        <shortName evidence="1">iPGM</shortName>
        <ecNumber evidence="1">5.4.2.12</ecNumber>
    </recommendedName>
</protein>
<organism>
    <name type="scientific">Symbiobacterium thermophilum (strain DSM 24528 / JCM 14929 / IAM 14863 / T)</name>
    <dbReference type="NCBI Taxonomy" id="292459"/>
    <lineage>
        <taxon>Bacteria</taxon>
        <taxon>Bacillati</taxon>
        <taxon>Bacillota</taxon>
        <taxon>Clostridia</taxon>
        <taxon>Eubacteriales</taxon>
        <taxon>Symbiobacteriaceae</taxon>
        <taxon>Symbiobacterium</taxon>
    </lineage>
</organism>
<gene>
    <name evidence="1" type="primary">gpmI</name>
    <name type="ordered locus">STH248</name>
</gene>
<name>GPMI_SYMTH</name>
<accession>Q67SW0</accession>
<comment type="function">
    <text evidence="1">Catalyzes the interconversion of 2-phosphoglycerate and 3-phosphoglycerate.</text>
</comment>
<comment type="catalytic activity">
    <reaction evidence="1">
        <text>(2R)-2-phosphoglycerate = (2R)-3-phosphoglycerate</text>
        <dbReference type="Rhea" id="RHEA:15901"/>
        <dbReference type="ChEBI" id="CHEBI:58272"/>
        <dbReference type="ChEBI" id="CHEBI:58289"/>
        <dbReference type="EC" id="5.4.2.12"/>
    </reaction>
</comment>
<comment type="cofactor">
    <cofactor evidence="1">
        <name>Mn(2+)</name>
        <dbReference type="ChEBI" id="CHEBI:29035"/>
    </cofactor>
    <text evidence="1">Binds 2 manganese ions per subunit.</text>
</comment>
<comment type="pathway">
    <text evidence="1">Carbohydrate degradation; glycolysis; pyruvate from D-glyceraldehyde 3-phosphate: step 3/5.</text>
</comment>
<comment type="subunit">
    <text evidence="1">Monomer.</text>
</comment>
<comment type="similarity">
    <text evidence="1">Belongs to the BPG-independent phosphoglycerate mutase family.</text>
</comment>
<reference key="1">
    <citation type="journal article" date="2004" name="Nucleic Acids Res.">
        <title>Genome sequence of Symbiobacterium thermophilum, an uncultivable bacterium that depends on microbial commensalism.</title>
        <authorList>
            <person name="Ueda K."/>
            <person name="Yamashita A."/>
            <person name="Ishikawa J."/>
            <person name="Shimada M."/>
            <person name="Watsuji T."/>
            <person name="Morimura K."/>
            <person name="Ikeda H."/>
            <person name="Hattori M."/>
            <person name="Beppu T."/>
        </authorList>
    </citation>
    <scope>NUCLEOTIDE SEQUENCE [LARGE SCALE GENOMIC DNA]</scope>
    <source>
        <strain>DSM 24528 / JCM 14929 / IAM 14863 / T</strain>
    </source>
</reference>